<keyword id="KW-0800">Toxin</keyword>
<name>MSD6_AMABI</name>
<reference key="1">
    <citation type="journal article" date="2007" name="Proc. Natl. Acad. Sci. U.S.A.">
        <title>Gene family encoding the major toxins of lethal Amanita mushrooms.</title>
        <authorList>
            <person name="Hallen H.E."/>
            <person name="Luo H."/>
            <person name="Scott-Craig J.S."/>
            <person name="Walton J.D."/>
        </authorList>
    </citation>
    <scope>NUCLEOTIDE SEQUENCE [GENOMIC DNA]</scope>
    <scope>FUNCTION</scope>
</reference>
<comment type="function">
    <text evidence="4">Probable toxin that belongs to the MSDIN-like toxin family responsible for a large number of food poisoning cases and deaths (PubMed:18025465).</text>
</comment>
<comment type="PTM">
    <text evidence="1 4">Processed by the macrocyclase-peptidase enzyme POPB to yield a toxic cyclic decapeptide (PubMed:18025465). POPB first removes 10 residues from the N-terminus (By similarity). Conformational trapping of the remaining peptide forces the enzyme to release this intermediate rather than proceed to macrocyclization (By similarity). The enzyme rebinds the remaining peptide in a different conformation and catalyzes macrocyclization of the N-terminal 10 residues (By similarity).</text>
</comment>
<comment type="similarity">
    <text evidence="3">Belongs to the MSDIN fungal toxin family.</text>
</comment>
<organism>
    <name type="scientific">Amanita bisporigera</name>
    <name type="common">Destroying angel</name>
    <dbReference type="NCBI Taxonomy" id="87325"/>
    <lineage>
        <taxon>Eukaryota</taxon>
        <taxon>Fungi</taxon>
        <taxon>Dikarya</taxon>
        <taxon>Basidiomycota</taxon>
        <taxon>Agaricomycotina</taxon>
        <taxon>Agaricomycetes</taxon>
        <taxon>Agaricomycetidae</taxon>
        <taxon>Agaricales</taxon>
        <taxon>Pluteineae</taxon>
        <taxon>Amanitaceae</taxon>
        <taxon>Amanita</taxon>
    </lineage>
</organism>
<dbReference type="EMBL" id="EU196149">
    <property type="protein sequence ID" value="ABW87778.1"/>
    <property type="molecule type" value="Genomic_DNA"/>
</dbReference>
<dbReference type="SMR" id="A8W7N4"/>
<dbReference type="GO" id="GO:0090729">
    <property type="term" value="F:toxin activity"/>
    <property type="evidence" value="ECO:0007669"/>
    <property type="project" value="UniProtKB-KW"/>
</dbReference>
<dbReference type="InterPro" id="IPR027582">
    <property type="entry name" value="Amanitin/phalloidin"/>
</dbReference>
<dbReference type="NCBIfam" id="TIGR04309">
    <property type="entry name" value="amanitin"/>
    <property type="match status" value="1"/>
</dbReference>
<protein>
    <recommendedName>
        <fullName evidence="2">MSDIN-like toxin proprotein 6</fullName>
    </recommendedName>
    <component>
        <recommendedName>
            <fullName evidence="2">Toxin MSD6</fullName>
        </recommendedName>
    </component>
</protein>
<sequence>MSDINGTRLPIPGLIPLGIPCVSDDVNPTLTRGER</sequence>
<proteinExistence type="inferred from homology"/>
<gene>
    <name evidence="2" type="primary">MSD6</name>
</gene>
<feature type="propeptide" id="PRO_0000443650" evidence="4">
    <location>
        <begin position="1"/>
        <end position="10"/>
    </location>
</feature>
<feature type="peptide" id="PRO_0000443651" description="Toxin MSD6" evidence="4">
    <location>
        <begin position="11"/>
        <end position="20"/>
    </location>
</feature>
<feature type="propeptide" id="PRO_0000443652" evidence="4">
    <location>
        <begin position="21"/>
        <end position="35"/>
    </location>
</feature>
<feature type="cross-link" description="Cyclopeptide (Ile-Pro)" evidence="4">
    <location>
        <begin position="11"/>
        <end position="20"/>
    </location>
</feature>
<accession>A8W7N4</accession>
<evidence type="ECO:0000250" key="1">
    <source>
        <dbReference type="UniProtKB" id="A0A067SLB9"/>
    </source>
</evidence>
<evidence type="ECO:0000303" key="2">
    <source>
    </source>
</evidence>
<evidence type="ECO:0000305" key="3"/>
<evidence type="ECO:0000305" key="4">
    <source>
    </source>
</evidence>